<reference key="1">
    <citation type="journal article" date="2004" name="Proc. Natl. Acad. Sci. U.S.A.">
        <title>Genomic analysis of Bacteroides fragilis reveals extensive DNA inversions regulating cell surface adaptation.</title>
        <authorList>
            <person name="Kuwahara T."/>
            <person name="Yamashita A."/>
            <person name="Hirakawa H."/>
            <person name="Nakayama H."/>
            <person name="Toh H."/>
            <person name="Okada N."/>
            <person name="Kuhara S."/>
            <person name="Hattori M."/>
            <person name="Hayashi T."/>
            <person name="Ohnishi Y."/>
        </authorList>
    </citation>
    <scope>NUCLEOTIDE SEQUENCE [LARGE SCALE GENOMIC DNA]</scope>
    <source>
        <strain>YCH46</strain>
    </source>
</reference>
<feature type="chain" id="PRO_0000111112" description="Small ribosomal subunit protein bS18">
    <location>
        <begin position="1"/>
        <end position="90"/>
    </location>
</feature>
<sequence length="90" mass="10660">MAQQVQSEIRYLTPPSVDVKKKKYCRFKKSGIKYIDYKDPEFLKKFLNEQGKILPRRITGTSLKFQRRIAQAVKRARHLALLPFVTDMMK</sequence>
<evidence type="ECO:0000255" key="1">
    <source>
        <dbReference type="HAMAP-Rule" id="MF_00270"/>
    </source>
</evidence>
<evidence type="ECO:0000305" key="2"/>
<proteinExistence type="inferred from homology"/>
<accession>Q64PH8</accession>
<keyword id="KW-0687">Ribonucleoprotein</keyword>
<keyword id="KW-0689">Ribosomal protein</keyword>
<keyword id="KW-0694">RNA-binding</keyword>
<keyword id="KW-0699">rRNA-binding</keyword>
<name>RS18_BACFR</name>
<dbReference type="EMBL" id="AP006841">
    <property type="protein sequence ID" value="BAD50603.1"/>
    <property type="molecule type" value="Genomic_DNA"/>
</dbReference>
<dbReference type="RefSeq" id="WP_005790946.1">
    <property type="nucleotide sequence ID" value="NZ_UYXF01000018.1"/>
</dbReference>
<dbReference type="RefSeq" id="YP_101137.1">
    <property type="nucleotide sequence ID" value="NC_006347.1"/>
</dbReference>
<dbReference type="SMR" id="Q64PH8"/>
<dbReference type="STRING" id="295405.BF3861"/>
<dbReference type="GeneID" id="60369262"/>
<dbReference type="KEGG" id="bfr:BF3861"/>
<dbReference type="PATRIC" id="fig|295405.11.peg.3705"/>
<dbReference type="HOGENOM" id="CLU_148710_2_0_10"/>
<dbReference type="OrthoDB" id="9812008at2"/>
<dbReference type="Proteomes" id="UP000002197">
    <property type="component" value="Chromosome"/>
</dbReference>
<dbReference type="GO" id="GO:0022627">
    <property type="term" value="C:cytosolic small ribosomal subunit"/>
    <property type="evidence" value="ECO:0007669"/>
    <property type="project" value="TreeGrafter"/>
</dbReference>
<dbReference type="GO" id="GO:0070181">
    <property type="term" value="F:small ribosomal subunit rRNA binding"/>
    <property type="evidence" value="ECO:0007669"/>
    <property type="project" value="TreeGrafter"/>
</dbReference>
<dbReference type="GO" id="GO:0003735">
    <property type="term" value="F:structural constituent of ribosome"/>
    <property type="evidence" value="ECO:0007669"/>
    <property type="project" value="InterPro"/>
</dbReference>
<dbReference type="GO" id="GO:0006412">
    <property type="term" value="P:translation"/>
    <property type="evidence" value="ECO:0007669"/>
    <property type="project" value="UniProtKB-UniRule"/>
</dbReference>
<dbReference type="FunFam" id="4.10.640.10:FF:000004">
    <property type="entry name" value="30S ribosomal protein S18"/>
    <property type="match status" value="1"/>
</dbReference>
<dbReference type="Gene3D" id="4.10.640.10">
    <property type="entry name" value="Ribosomal protein S18"/>
    <property type="match status" value="1"/>
</dbReference>
<dbReference type="HAMAP" id="MF_00270">
    <property type="entry name" value="Ribosomal_bS18"/>
    <property type="match status" value="1"/>
</dbReference>
<dbReference type="InterPro" id="IPR001648">
    <property type="entry name" value="Ribosomal_bS18"/>
</dbReference>
<dbReference type="InterPro" id="IPR018275">
    <property type="entry name" value="Ribosomal_bS18_CS"/>
</dbReference>
<dbReference type="InterPro" id="IPR036870">
    <property type="entry name" value="Ribosomal_bS18_sf"/>
</dbReference>
<dbReference type="NCBIfam" id="TIGR00165">
    <property type="entry name" value="S18"/>
    <property type="match status" value="1"/>
</dbReference>
<dbReference type="PANTHER" id="PTHR13479">
    <property type="entry name" value="30S RIBOSOMAL PROTEIN S18"/>
    <property type="match status" value="1"/>
</dbReference>
<dbReference type="PANTHER" id="PTHR13479:SF40">
    <property type="entry name" value="SMALL RIBOSOMAL SUBUNIT PROTEIN BS18M"/>
    <property type="match status" value="1"/>
</dbReference>
<dbReference type="Pfam" id="PF01084">
    <property type="entry name" value="Ribosomal_S18"/>
    <property type="match status" value="1"/>
</dbReference>
<dbReference type="PRINTS" id="PR00974">
    <property type="entry name" value="RIBOSOMALS18"/>
</dbReference>
<dbReference type="SUPFAM" id="SSF46911">
    <property type="entry name" value="Ribosomal protein S18"/>
    <property type="match status" value="1"/>
</dbReference>
<dbReference type="PROSITE" id="PS00057">
    <property type="entry name" value="RIBOSOMAL_S18"/>
    <property type="match status" value="1"/>
</dbReference>
<protein>
    <recommendedName>
        <fullName evidence="1">Small ribosomal subunit protein bS18</fullName>
    </recommendedName>
    <alternativeName>
        <fullName evidence="2">30S ribosomal protein S18</fullName>
    </alternativeName>
</protein>
<organism>
    <name type="scientific">Bacteroides fragilis (strain YCH46)</name>
    <dbReference type="NCBI Taxonomy" id="295405"/>
    <lineage>
        <taxon>Bacteria</taxon>
        <taxon>Pseudomonadati</taxon>
        <taxon>Bacteroidota</taxon>
        <taxon>Bacteroidia</taxon>
        <taxon>Bacteroidales</taxon>
        <taxon>Bacteroidaceae</taxon>
        <taxon>Bacteroides</taxon>
    </lineage>
</organism>
<gene>
    <name evidence="1" type="primary">rpsR</name>
    <name type="ordered locus">BF3861</name>
</gene>
<comment type="function">
    <text evidence="1">Binds as a heterodimer with protein bS6 to the central domain of the 16S rRNA, where it helps stabilize the platform of the 30S subunit.</text>
</comment>
<comment type="subunit">
    <text evidence="1">Part of the 30S ribosomal subunit. Forms a tight heterodimer with protein bS6.</text>
</comment>
<comment type="similarity">
    <text evidence="1">Belongs to the bacterial ribosomal protein bS18 family.</text>
</comment>